<name>RI2BC_ARATH</name>
<dbReference type="EMBL" id="AB023040">
    <property type="status" value="NOT_ANNOTATED_CDS"/>
    <property type="molecule type" value="Genomic_DNA"/>
</dbReference>
<dbReference type="EMBL" id="CP002688">
    <property type="status" value="NOT_ANNOTATED_CDS"/>
    <property type="molecule type" value="Genomic_DNA"/>
</dbReference>
<dbReference type="EMBL" id="BT004167">
    <property type="protein sequence ID" value="AAO42187.1"/>
    <property type="status" value="ALT_SEQ"/>
    <property type="molecule type" value="mRNA"/>
</dbReference>
<dbReference type="SMR" id="P0DKH2"/>
<dbReference type="STRING" id="3702.P0DKH2"/>
<dbReference type="PeptideAtlas" id="P0DKH2"/>
<dbReference type="Araport" id="AT5G40942"/>
<dbReference type="TAIR" id="AT5G40942"/>
<dbReference type="InParanoid" id="P0DKH2"/>
<dbReference type="BRENDA" id="1.17.4.1">
    <property type="organism ID" value="399"/>
</dbReference>
<dbReference type="BRENDA" id="1.17.4.2">
    <property type="organism ID" value="399"/>
</dbReference>
<dbReference type="Proteomes" id="UP000006548">
    <property type="component" value="Chromosome 5"/>
</dbReference>
<dbReference type="ExpressionAtlas" id="P0DKH2">
    <property type="expression patterns" value="baseline and differential"/>
</dbReference>
<dbReference type="GO" id="GO:0016491">
    <property type="term" value="F:oxidoreductase activity"/>
    <property type="evidence" value="ECO:0007669"/>
    <property type="project" value="InterPro"/>
</dbReference>
<dbReference type="GO" id="GO:0009263">
    <property type="term" value="P:deoxyribonucleotide biosynthetic process"/>
    <property type="evidence" value="ECO:0007669"/>
    <property type="project" value="InterPro"/>
</dbReference>
<dbReference type="CDD" id="cd01049">
    <property type="entry name" value="RNRR2"/>
    <property type="match status" value="1"/>
</dbReference>
<dbReference type="Gene3D" id="1.10.620.20">
    <property type="entry name" value="Ribonucleotide Reductase, subunit A"/>
    <property type="match status" value="1"/>
</dbReference>
<dbReference type="InterPro" id="IPR009078">
    <property type="entry name" value="Ferritin-like_SF"/>
</dbReference>
<dbReference type="InterPro" id="IPR012348">
    <property type="entry name" value="RNR-like"/>
</dbReference>
<dbReference type="InterPro" id="IPR033909">
    <property type="entry name" value="RNR_small"/>
</dbReference>
<dbReference type="InterPro" id="IPR030475">
    <property type="entry name" value="RNR_small_AS"/>
</dbReference>
<dbReference type="InterPro" id="IPR000358">
    <property type="entry name" value="RNR_small_fam"/>
</dbReference>
<dbReference type="PANTHER" id="PTHR23409">
    <property type="entry name" value="RIBONUCLEOSIDE-DIPHOSPHATE REDUCTASE SMALL CHAIN"/>
    <property type="match status" value="1"/>
</dbReference>
<dbReference type="PANTHER" id="PTHR23409:SF18">
    <property type="entry name" value="RIBONUCLEOSIDE-DIPHOSPHATE REDUCTASE SUBUNIT M2"/>
    <property type="match status" value="1"/>
</dbReference>
<dbReference type="Pfam" id="PF00268">
    <property type="entry name" value="Ribonuc_red_sm"/>
    <property type="match status" value="1"/>
</dbReference>
<dbReference type="SUPFAM" id="SSF47240">
    <property type="entry name" value="Ferritin-like"/>
    <property type="match status" value="1"/>
</dbReference>
<dbReference type="PROSITE" id="PS00368">
    <property type="entry name" value="RIBORED_SMALL"/>
    <property type="match status" value="1"/>
</dbReference>
<accession>P0DKH2</accession>
<accession>Q6Y657</accession>
<accession>Q84W71</accession>
<feature type="chain" id="PRO_0000254194" description="Putative ribonucleoside-diphosphate reductase small chain B">
    <location>
        <begin position="1"/>
        <end position="158"/>
    </location>
</feature>
<keyword id="KW-1185">Reference proteome</keyword>
<sequence length="158" mass="18715">MPSMPEEPILTPTPDRFCMFPIQYPQIWEMYKKAEASFWTAEEVDLSQDNRDWENSLTNDERHFIKHVLAFFAASDGIVLENLSTRFMSDVQISEARAFYGFQIAIENIHSEMYSLLLDTYIKDNKERDHLFRAIETIPCDEKSRMGYEMDQRISKLR</sequence>
<gene>
    <name type="primary">RNR2B</name>
    <name type="synonym">RNR2B-1</name>
    <name type="ordered locus">At5g40942</name>
    <name type="ORF">MMG1.4</name>
</gene>
<comment type="similarity">
    <text evidence="1">Belongs to the ribonucleoside diphosphate reductase small chain family.</text>
</comment>
<comment type="caution">
    <text evidence="1">Could be the product of a pseudogene. In strain cv. Columbia, a frameshift at position 140 results in a truncated RNR2B protein. The resulting sequence lacks the conserved features of the family. A second start codon could potentially direct the translational initiation of a second peptide homologous with TSO2 (AC Q9LSD0) at residues 141 to 332. A complete sequence for a functional RNR2B can be found in strain cv. Landsberg erecta (AC P0DKH3).</text>
</comment>
<comment type="sequence caution" evidence="1">
    <conflict type="erroneous translation">
        <sequence resource="EMBL-CDS" id="AAO42187"/>
    </conflict>
    <text>Wrong choice of frame.</text>
</comment>
<protein>
    <recommendedName>
        <fullName>Putative ribonucleoside-diphosphate reductase small chain B</fullName>
    </recommendedName>
    <alternativeName>
        <fullName>Ribonucleoside-diphosphate reductase R2B subunit</fullName>
    </alternativeName>
    <alternativeName>
        <fullName>Ribonucleotide reductase small subunit B</fullName>
    </alternativeName>
</protein>
<organism>
    <name type="scientific">Arabidopsis thaliana</name>
    <name type="common">Mouse-ear cress</name>
    <dbReference type="NCBI Taxonomy" id="3702"/>
    <lineage>
        <taxon>Eukaryota</taxon>
        <taxon>Viridiplantae</taxon>
        <taxon>Streptophyta</taxon>
        <taxon>Embryophyta</taxon>
        <taxon>Tracheophyta</taxon>
        <taxon>Spermatophyta</taxon>
        <taxon>Magnoliopsida</taxon>
        <taxon>eudicotyledons</taxon>
        <taxon>Gunneridae</taxon>
        <taxon>Pentapetalae</taxon>
        <taxon>rosids</taxon>
        <taxon>malvids</taxon>
        <taxon>Brassicales</taxon>
        <taxon>Brassicaceae</taxon>
        <taxon>Camelineae</taxon>
        <taxon>Arabidopsis</taxon>
    </lineage>
</organism>
<proteinExistence type="uncertain"/>
<evidence type="ECO:0000305" key="1"/>
<reference key="1">
    <citation type="journal article" date="2006" name="Plant Cell">
        <title>Arabidopsis ribonucleotide reductases are critical for cell cycle progression, DNA damage repair, and plant development.</title>
        <authorList>
            <person name="Wang C."/>
            <person name="Liu Z."/>
        </authorList>
    </citation>
    <scope>NUCLEOTIDE SEQUENCE [LARGE SCALE GENOMIC DNA]</scope>
    <scope>IDENTIFICATION AS A PSEUDOGENE</scope>
    <source>
        <strain>cv. Columbia</strain>
    </source>
</reference>
<reference key="2">
    <citation type="submission" date="1999-02" db="EMBL/GenBank/DDBJ databases">
        <title>Structural analysis of Arabidopsis thaliana chromosome 5. XI.</title>
        <authorList>
            <person name="Kaneko T."/>
            <person name="Katoh T."/>
            <person name="Asamizu E."/>
            <person name="Sato S."/>
            <person name="Nakamura Y."/>
            <person name="Kotani H."/>
            <person name="Tabata S."/>
        </authorList>
    </citation>
    <scope>NUCLEOTIDE SEQUENCE [LARGE SCALE GENOMIC DNA]</scope>
    <source>
        <strain>cv. Columbia</strain>
    </source>
</reference>
<reference key="3">
    <citation type="journal article" date="2017" name="Plant J.">
        <title>Araport11: a complete reannotation of the Arabidopsis thaliana reference genome.</title>
        <authorList>
            <person name="Cheng C.Y."/>
            <person name="Krishnakumar V."/>
            <person name="Chan A.P."/>
            <person name="Thibaud-Nissen F."/>
            <person name="Schobel S."/>
            <person name="Town C.D."/>
        </authorList>
    </citation>
    <scope>GENOME REANNOTATION</scope>
    <source>
        <strain>cv. Columbia</strain>
    </source>
</reference>
<reference key="4">
    <citation type="journal article" date="2003" name="Science">
        <title>Empirical analysis of transcriptional activity in the Arabidopsis genome.</title>
        <authorList>
            <person name="Yamada K."/>
            <person name="Lim J."/>
            <person name="Dale J.M."/>
            <person name="Chen H."/>
            <person name="Shinn P."/>
            <person name="Palm C.J."/>
            <person name="Southwick A.M."/>
            <person name="Wu H.C."/>
            <person name="Kim C.J."/>
            <person name="Nguyen M."/>
            <person name="Pham P.K."/>
            <person name="Cheuk R.F."/>
            <person name="Karlin-Newmann G."/>
            <person name="Liu S.X."/>
            <person name="Lam B."/>
            <person name="Sakano H."/>
            <person name="Wu T."/>
            <person name="Yu G."/>
            <person name="Miranda M."/>
            <person name="Quach H.L."/>
            <person name="Tripp M."/>
            <person name="Chang C.H."/>
            <person name="Lee J.M."/>
            <person name="Toriumi M.J."/>
            <person name="Chan M.M."/>
            <person name="Tang C.C."/>
            <person name="Onodera C.S."/>
            <person name="Deng J.M."/>
            <person name="Akiyama K."/>
            <person name="Ansari Y."/>
            <person name="Arakawa T."/>
            <person name="Banh J."/>
            <person name="Banno F."/>
            <person name="Bowser L."/>
            <person name="Brooks S.Y."/>
            <person name="Carninci P."/>
            <person name="Chao Q."/>
            <person name="Choy N."/>
            <person name="Enju A."/>
            <person name="Goldsmith A.D."/>
            <person name="Gurjal M."/>
            <person name="Hansen N.F."/>
            <person name="Hayashizaki Y."/>
            <person name="Johnson-Hopson C."/>
            <person name="Hsuan V.W."/>
            <person name="Iida K."/>
            <person name="Karnes M."/>
            <person name="Khan S."/>
            <person name="Koesema E."/>
            <person name="Ishida J."/>
            <person name="Jiang P.X."/>
            <person name="Jones T."/>
            <person name="Kawai J."/>
            <person name="Kamiya A."/>
            <person name="Meyers C."/>
            <person name="Nakajima M."/>
            <person name="Narusaka M."/>
            <person name="Seki M."/>
            <person name="Sakurai T."/>
            <person name="Satou M."/>
            <person name="Tamse R."/>
            <person name="Vaysberg M."/>
            <person name="Wallender E.K."/>
            <person name="Wong C."/>
            <person name="Yamamura Y."/>
            <person name="Yuan S."/>
            <person name="Shinozaki K."/>
            <person name="Davis R.W."/>
            <person name="Theologis A."/>
            <person name="Ecker J.R."/>
        </authorList>
    </citation>
    <scope>NUCLEOTIDE SEQUENCE [LARGE SCALE MRNA]</scope>
    <source>
        <strain>cv. Columbia</strain>
    </source>
</reference>